<dbReference type="EMBL" id="D64080">
    <property type="protein sequence ID" value="BAA10962.1"/>
    <property type="molecule type" value="mRNA"/>
</dbReference>
<dbReference type="SMR" id="P54959"/>
<dbReference type="GO" id="GO:0005737">
    <property type="term" value="C:cytoplasm"/>
    <property type="evidence" value="ECO:0007669"/>
    <property type="project" value="UniProtKB-SubCell"/>
</dbReference>
<dbReference type="GO" id="GO:0005525">
    <property type="term" value="F:GTP binding"/>
    <property type="evidence" value="ECO:0007669"/>
    <property type="project" value="UniProtKB-KW"/>
</dbReference>
<dbReference type="GO" id="GO:0003924">
    <property type="term" value="F:GTPase activity"/>
    <property type="evidence" value="ECO:0007669"/>
    <property type="project" value="InterPro"/>
</dbReference>
<dbReference type="GO" id="GO:0003746">
    <property type="term" value="F:translation elongation factor activity"/>
    <property type="evidence" value="ECO:0007669"/>
    <property type="project" value="UniProtKB-KW"/>
</dbReference>
<dbReference type="CDD" id="cd01883">
    <property type="entry name" value="EF1_alpha"/>
    <property type="match status" value="1"/>
</dbReference>
<dbReference type="CDD" id="cd03693">
    <property type="entry name" value="EF1_alpha_II"/>
    <property type="match status" value="1"/>
</dbReference>
<dbReference type="CDD" id="cd03705">
    <property type="entry name" value="EF1_alpha_III"/>
    <property type="match status" value="1"/>
</dbReference>
<dbReference type="FunFam" id="2.40.30.10:FF:000003">
    <property type="entry name" value="Elongation factor 1-alpha"/>
    <property type="match status" value="1"/>
</dbReference>
<dbReference type="FunFam" id="2.40.30.10:FF:000005">
    <property type="entry name" value="Elongation factor 1-alpha"/>
    <property type="match status" value="1"/>
</dbReference>
<dbReference type="FunFam" id="3.40.50.300:FF:000255">
    <property type="entry name" value="Elongation factor 1-alpha"/>
    <property type="match status" value="1"/>
</dbReference>
<dbReference type="Gene3D" id="3.40.50.300">
    <property type="entry name" value="P-loop containing nucleotide triphosphate hydrolases"/>
    <property type="match status" value="1"/>
</dbReference>
<dbReference type="Gene3D" id="2.40.30.10">
    <property type="entry name" value="Translation factors"/>
    <property type="match status" value="2"/>
</dbReference>
<dbReference type="HAMAP" id="MF_00118_A">
    <property type="entry name" value="EF_Tu_A"/>
    <property type="match status" value="1"/>
</dbReference>
<dbReference type="InterPro" id="IPR004161">
    <property type="entry name" value="EFTu-like_2"/>
</dbReference>
<dbReference type="InterPro" id="IPR054696">
    <property type="entry name" value="GTP-eEF1A_C"/>
</dbReference>
<dbReference type="InterPro" id="IPR027417">
    <property type="entry name" value="P-loop_NTPase"/>
</dbReference>
<dbReference type="InterPro" id="IPR000795">
    <property type="entry name" value="T_Tr_GTP-bd_dom"/>
</dbReference>
<dbReference type="InterPro" id="IPR050100">
    <property type="entry name" value="TRAFAC_GTPase_members"/>
</dbReference>
<dbReference type="InterPro" id="IPR009000">
    <property type="entry name" value="Transl_B-barrel_sf"/>
</dbReference>
<dbReference type="InterPro" id="IPR009001">
    <property type="entry name" value="Transl_elong_EF1A/Init_IF2_C"/>
</dbReference>
<dbReference type="InterPro" id="IPR004539">
    <property type="entry name" value="Transl_elong_EF1A_euk/arc"/>
</dbReference>
<dbReference type="NCBIfam" id="TIGR00483">
    <property type="entry name" value="EF-1_alpha"/>
    <property type="match status" value="1"/>
</dbReference>
<dbReference type="NCBIfam" id="NF008969">
    <property type="entry name" value="PRK12317.1"/>
    <property type="match status" value="1"/>
</dbReference>
<dbReference type="PANTHER" id="PTHR23115">
    <property type="entry name" value="TRANSLATION FACTOR"/>
    <property type="match status" value="1"/>
</dbReference>
<dbReference type="Pfam" id="PF22594">
    <property type="entry name" value="GTP-eEF1A_C"/>
    <property type="match status" value="1"/>
</dbReference>
<dbReference type="Pfam" id="PF00009">
    <property type="entry name" value="GTP_EFTU"/>
    <property type="match status" value="1"/>
</dbReference>
<dbReference type="Pfam" id="PF03144">
    <property type="entry name" value="GTP_EFTU_D2"/>
    <property type="match status" value="1"/>
</dbReference>
<dbReference type="PRINTS" id="PR00315">
    <property type="entry name" value="ELONGATNFCT"/>
</dbReference>
<dbReference type="SUPFAM" id="SSF50465">
    <property type="entry name" value="EF-Tu/eEF-1alpha/eIF2-gamma C-terminal domain"/>
    <property type="match status" value="1"/>
</dbReference>
<dbReference type="SUPFAM" id="SSF52540">
    <property type="entry name" value="P-loop containing nucleoside triphosphate hydrolases"/>
    <property type="match status" value="1"/>
</dbReference>
<dbReference type="SUPFAM" id="SSF50447">
    <property type="entry name" value="Translation proteins"/>
    <property type="match status" value="1"/>
</dbReference>
<dbReference type="PROSITE" id="PS51722">
    <property type="entry name" value="G_TR_2"/>
    <property type="match status" value="1"/>
</dbReference>
<keyword id="KW-0963">Cytoplasm</keyword>
<keyword id="KW-0251">Elongation factor</keyword>
<keyword id="KW-0342">GTP-binding</keyword>
<keyword id="KW-0547">Nucleotide-binding</keyword>
<keyword id="KW-0648">Protein biosynthesis</keyword>
<accession>P54959</accession>
<name>EF1A_BLAHO</name>
<proteinExistence type="evidence at transcript level"/>
<sequence>MGKEKPHINLVVIGHVVAGKSTTTGHLIYACGGIDKRTIERFEEGGQRIGKGSFKYAWVLAKMKAERERGITIDISLWKFETRKDFFTIIDAPGHRDFIKNMITGTSQADVAILVIASGAGEFEAGYSKNGQTREHALLANTLGVKQMIVCCNKMDDKSVNYSEARYKEIKNEMTSFLTKVGYAKVEERIPFIPISGFNGDNMIEHSANMPWYKGPTLLEALDNVHPPKRPVDKPLRLPLQDVYKIGGIGTVPVGRVETGVLKPGMTVTFAPVNVSTEVKSVEMHHESIPQALPGDNVGFNVNNVSVEDIHRGNVCGDAKNDPPCKTESDAQVIVMNHPSGIRPGYCPVVDCHTAHIACKFEKIMSEMDKRTGKVLRENPDIVKNGKSMMAQLVPSKPMCVETFSDYPPLGRFAVRDMRQTVAVGIIKSTVRAK</sequence>
<feature type="chain" id="PRO_0000090955" description="Elongation factor 1-alpha">
    <location>
        <begin position="1"/>
        <end position="434"/>
    </location>
</feature>
<feature type="domain" description="tr-type G">
    <location>
        <begin position="5"/>
        <end position="232"/>
    </location>
</feature>
<feature type="region of interest" description="G1" evidence="1">
    <location>
        <begin position="14"/>
        <end position="21"/>
    </location>
</feature>
<feature type="region of interest" description="G2" evidence="1">
    <location>
        <begin position="70"/>
        <end position="74"/>
    </location>
</feature>
<feature type="region of interest" description="G3" evidence="1">
    <location>
        <begin position="91"/>
        <end position="94"/>
    </location>
</feature>
<feature type="region of interest" description="G4" evidence="1">
    <location>
        <begin position="153"/>
        <end position="156"/>
    </location>
</feature>
<feature type="region of interest" description="G5" evidence="1">
    <location>
        <begin position="196"/>
        <end position="198"/>
    </location>
</feature>
<feature type="binding site" evidence="1">
    <location>
        <begin position="14"/>
        <end position="21"/>
    </location>
    <ligand>
        <name>GTP</name>
        <dbReference type="ChEBI" id="CHEBI:37565"/>
    </ligand>
</feature>
<feature type="binding site" evidence="1">
    <location>
        <begin position="91"/>
        <end position="95"/>
    </location>
    <ligand>
        <name>GTP</name>
        <dbReference type="ChEBI" id="CHEBI:37565"/>
    </ligand>
</feature>
<feature type="binding site" evidence="1">
    <location>
        <begin position="153"/>
        <end position="156"/>
    </location>
    <ligand>
        <name>GTP</name>
        <dbReference type="ChEBI" id="CHEBI:37565"/>
    </ligand>
</feature>
<evidence type="ECO:0000250" key="1"/>
<evidence type="ECO:0000305" key="2"/>
<organism>
    <name type="scientific">Blastocystis hominis</name>
    <dbReference type="NCBI Taxonomy" id="12968"/>
    <lineage>
        <taxon>Eukaryota</taxon>
        <taxon>Sar</taxon>
        <taxon>Stramenopiles</taxon>
        <taxon>Bigyra</taxon>
        <taxon>Opalozoa</taxon>
        <taxon>Opalinata</taxon>
        <taxon>Blastocystidae</taxon>
        <taxon>Blastocystis</taxon>
    </lineage>
</organism>
<protein>
    <recommendedName>
        <fullName>Elongation factor 1-alpha</fullName>
        <shortName>EF-1-alpha</shortName>
    </recommendedName>
</protein>
<reference key="1">
    <citation type="journal article" date="1996" name="Mol. Biochem. Parasitol.">
        <title>Phylogenetic position of Blastocystis hominis that contains cytochrome-free mitochondria, inferred from the protein phylogeny of elongation factor 1 alpha.</title>
        <authorList>
            <person name="Nakamura Y."/>
            <person name="Hashimoto T."/>
            <person name="Yoshikawa H."/>
            <person name="Kamaishi T."/>
            <person name="Nakamura F."/>
            <person name="Okamoto K.I."/>
            <person name="Hasegawa M."/>
        </authorList>
    </citation>
    <scope>NUCLEOTIDE SEQUENCE [MRNA]</scope>
    <source>
        <strain>HE87-1</strain>
    </source>
</reference>
<comment type="function">
    <text>This protein promotes the GTP-dependent binding of aminoacyl-tRNA to the A-site of ribosomes during protein biosynthesis.</text>
</comment>
<comment type="subcellular location">
    <subcellularLocation>
        <location>Cytoplasm</location>
    </subcellularLocation>
</comment>
<comment type="similarity">
    <text evidence="2">Belongs to the TRAFAC class translation factor GTPase superfamily. Classic translation factor GTPase family. EF-Tu/EF-1A subfamily.</text>
</comment>